<evidence type="ECO:0000250" key="1"/>
<evidence type="ECO:0000305" key="2"/>
<keyword id="KW-0963">Cytoplasm</keyword>
<keyword id="KW-0489">Methyltransferase</keyword>
<keyword id="KW-1185">Reference proteome</keyword>
<keyword id="KW-0949">S-adenosyl-L-methionine</keyword>
<keyword id="KW-0808">Transferase</keyword>
<keyword id="KW-0819">tRNA processing</keyword>
<gene>
    <name type="primary">TRM44</name>
    <name type="ordered locus">AGL241W</name>
</gene>
<protein>
    <recommendedName>
        <fullName>tRNA (uracil-O(2)-)-methyltransferase</fullName>
        <ecNumber>2.1.1.211</ecNumber>
    </recommendedName>
</protein>
<accession>Q751E7</accession>
<feature type="chain" id="PRO_0000249900" description="tRNA (uracil-O(2)-)-methyltransferase">
    <location>
        <begin position="1"/>
        <end position="531"/>
    </location>
</feature>
<comment type="function">
    <text evidence="1">Probable adenosyl-L-methionine (AdoMet)-dependent tRNA (uracil-O(2)-)-methyltransferase.</text>
</comment>
<comment type="catalytic activity">
    <reaction>
        <text>uridine(44) in tRNA(Ser) + S-adenosyl-L-methionine = 2'-O-methyluridine(44) in tRNA(Ser) + S-adenosyl-L-homocysteine + H(+)</text>
        <dbReference type="Rhea" id="RHEA:43100"/>
        <dbReference type="Rhea" id="RHEA-COMP:10339"/>
        <dbReference type="Rhea" id="RHEA-COMP:10340"/>
        <dbReference type="ChEBI" id="CHEBI:15378"/>
        <dbReference type="ChEBI" id="CHEBI:57856"/>
        <dbReference type="ChEBI" id="CHEBI:59789"/>
        <dbReference type="ChEBI" id="CHEBI:65315"/>
        <dbReference type="ChEBI" id="CHEBI:74478"/>
        <dbReference type="EC" id="2.1.1.211"/>
    </reaction>
</comment>
<comment type="subcellular location">
    <subcellularLocation>
        <location evidence="1">Cytoplasm</location>
    </subcellularLocation>
</comment>
<comment type="similarity">
    <text evidence="2">Belongs to the TRM44 family.</text>
</comment>
<reference key="1">
    <citation type="journal article" date="2004" name="Science">
        <title>The Ashbya gossypii genome as a tool for mapping the ancient Saccharomyces cerevisiae genome.</title>
        <authorList>
            <person name="Dietrich F.S."/>
            <person name="Voegeli S."/>
            <person name="Brachat S."/>
            <person name="Lerch A."/>
            <person name="Gates K."/>
            <person name="Steiner S."/>
            <person name="Mohr C."/>
            <person name="Poehlmann R."/>
            <person name="Luedi P."/>
            <person name="Choi S."/>
            <person name="Wing R.A."/>
            <person name="Flavier A."/>
            <person name="Gaffney T.D."/>
            <person name="Philippsen P."/>
        </authorList>
    </citation>
    <scope>NUCLEOTIDE SEQUENCE [LARGE SCALE GENOMIC DNA]</scope>
    <source>
        <strain>ATCC 10895 / CBS 109.51 / FGSC 9923 / NRRL Y-1056</strain>
    </source>
</reference>
<reference key="2">
    <citation type="journal article" date="2013" name="G3 (Bethesda)">
        <title>Genomes of Ashbya fungi isolated from insects reveal four mating-type loci, numerous translocations, lack of transposons, and distinct gene duplications.</title>
        <authorList>
            <person name="Dietrich F.S."/>
            <person name="Voegeli S."/>
            <person name="Kuo S."/>
            <person name="Philippsen P."/>
        </authorList>
    </citation>
    <scope>GENOME REANNOTATION</scope>
    <source>
        <strain>ATCC 10895 / CBS 109.51 / FGSC 9923 / NRRL Y-1056</strain>
    </source>
</reference>
<sequence length="531" mass="59306">MTFEFCGGESSILGGAWVCIYQTAEDVGFQREHFEQAMDNVIRHPNINSTVLLRADIVAEREYDCRTGEAVRDGNCGAAADVAEGMLSVGLEDVAARSVHTELDLAVKLEFVRRLVPRNPYKDALINQTCLVLNTREPSETALVVYLPHFSEREDCPFYIPPVAAVGILLHGGRLSVHYIPFAGEGAALADEGQRAVRTARRLLQTAEKHSKGCMNGYTKRVEHDVVVDKVLFQERYIQLKKKYSQWLVDNWAESTDPRKHVFEDIAIAAFLIELWSKIYGQHAEDKFRFCDMGCGNGVLCYILLMEGYAGEGIDARRRKSWGMFPENVRSCLKEQLVIPSLLLRPHPEIRKMASHMEHNGGFFPVHVSSSQLMAPATIVYSAADLITSPQVNIAEFPPNTFLIGNHSDELTCWIPLLGQPFMVIPCCSHNFHGARVRYRPSRESATRLGNSTYAGLVDYVEYLAKAVGWETEKEMLRIPSTRNAAIIGYKNPALGQFPTQQVYDEVLKNGGAEGWIQSATALLKGTPKSH</sequence>
<dbReference type="EC" id="2.1.1.211"/>
<dbReference type="EMBL" id="AE016820">
    <property type="protein sequence ID" value="AAS54250.1"/>
    <property type="molecule type" value="Genomic_DNA"/>
</dbReference>
<dbReference type="RefSeq" id="NP_986426.1">
    <property type="nucleotide sequence ID" value="NM_211488.1"/>
</dbReference>
<dbReference type="FunCoup" id="Q751E7">
    <property type="interactions" value="102"/>
</dbReference>
<dbReference type="STRING" id="284811.Q751E7"/>
<dbReference type="EnsemblFungi" id="AAS54250">
    <property type="protein sequence ID" value="AAS54250"/>
    <property type="gene ID" value="AGOS_AGL241W"/>
</dbReference>
<dbReference type="GeneID" id="4622719"/>
<dbReference type="KEGG" id="ago:AGOS_AGL241W"/>
<dbReference type="eggNOG" id="KOG3790">
    <property type="taxonomic scope" value="Eukaryota"/>
</dbReference>
<dbReference type="HOGENOM" id="CLU_018580_2_0_1"/>
<dbReference type="InParanoid" id="Q751E7"/>
<dbReference type="OMA" id="IREPNIN"/>
<dbReference type="OrthoDB" id="10047021at2759"/>
<dbReference type="Proteomes" id="UP000000591">
    <property type="component" value="Chromosome VII"/>
</dbReference>
<dbReference type="GO" id="GO:0005737">
    <property type="term" value="C:cytoplasm"/>
    <property type="evidence" value="ECO:0007669"/>
    <property type="project" value="UniProtKB-SubCell"/>
</dbReference>
<dbReference type="GO" id="GO:0016300">
    <property type="term" value="F:tRNA (uridine) methyltransferase activity"/>
    <property type="evidence" value="ECO:0000318"/>
    <property type="project" value="GO_Central"/>
</dbReference>
<dbReference type="GO" id="GO:0141101">
    <property type="term" value="F:tRNA(Ser) (uridine(44)-2'-O-)-methyltransferase activity"/>
    <property type="evidence" value="ECO:0007669"/>
    <property type="project" value="UniProtKB-EC"/>
</dbReference>
<dbReference type="GO" id="GO:0030488">
    <property type="term" value="P:tRNA methylation"/>
    <property type="evidence" value="ECO:0000318"/>
    <property type="project" value="GO_Central"/>
</dbReference>
<dbReference type="GO" id="GO:0002128">
    <property type="term" value="P:tRNA nucleoside ribose methylation"/>
    <property type="evidence" value="ECO:0007669"/>
    <property type="project" value="EnsemblFungi"/>
</dbReference>
<dbReference type="InterPro" id="IPR029063">
    <property type="entry name" value="SAM-dependent_MTases_sf"/>
</dbReference>
<dbReference type="InterPro" id="IPR011671">
    <property type="entry name" value="tRNA_uracil_MeTrfase"/>
</dbReference>
<dbReference type="PANTHER" id="PTHR21210">
    <property type="entry name" value="TRNA (URACIL-O(2)-)-METHYLTRANSFERASE-RELATED"/>
    <property type="match status" value="1"/>
</dbReference>
<dbReference type="PANTHER" id="PTHR21210:SF0">
    <property type="entry name" value="TRNA (URACIL-O(2)-)-METHYLTRANSFERASE-RELATED"/>
    <property type="match status" value="1"/>
</dbReference>
<dbReference type="Pfam" id="PF07757">
    <property type="entry name" value="AdoMet_MTase"/>
    <property type="match status" value="1"/>
</dbReference>
<dbReference type="SUPFAM" id="SSF53335">
    <property type="entry name" value="S-adenosyl-L-methionine-dependent methyltransferases"/>
    <property type="match status" value="1"/>
</dbReference>
<proteinExistence type="inferred from homology"/>
<organism>
    <name type="scientific">Eremothecium gossypii (strain ATCC 10895 / CBS 109.51 / FGSC 9923 / NRRL Y-1056)</name>
    <name type="common">Yeast</name>
    <name type="synonym">Ashbya gossypii</name>
    <dbReference type="NCBI Taxonomy" id="284811"/>
    <lineage>
        <taxon>Eukaryota</taxon>
        <taxon>Fungi</taxon>
        <taxon>Dikarya</taxon>
        <taxon>Ascomycota</taxon>
        <taxon>Saccharomycotina</taxon>
        <taxon>Saccharomycetes</taxon>
        <taxon>Saccharomycetales</taxon>
        <taxon>Saccharomycetaceae</taxon>
        <taxon>Eremothecium</taxon>
    </lineage>
</organism>
<name>TRM44_EREGS</name>